<protein>
    <recommendedName>
        <fullName>Glutelin type-B 4</fullName>
    </recommendedName>
    <component>
        <recommendedName>
            <fullName>Glutelin type-B 4 acidic chain</fullName>
        </recommendedName>
    </component>
    <component>
        <recommendedName>
            <fullName>Glutelin type-B 4 basic chain</fullName>
        </recommendedName>
    </component>
</protein>
<keyword id="KW-0903">Direct protein sequencing</keyword>
<keyword id="KW-1015">Disulfide bond</keyword>
<keyword id="KW-1185">Reference proteome</keyword>
<keyword id="KW-0708">Seed storage protein</keyword>
<keyword id="KW-0732">Signal</keyword>
<keyword id="KW-0758">Storage protein</keyword>
<comment type="function">
    <text>Seed storage protein.</text>
</comment>
<comment type="subunit">
    <text evidence="1">Hexamer; each subunit is composed of an acidic and a basic chain derived from a single precursor and linked by a disulfide bond.</text>
</comment>
<comment type="tissue specificity">
    <text evidence="4">Expressed in endosperm (at protein level).</text>
</comment>
<comment type="similarity">
    <text evidence="5">Belongs to the 11S seed storage protein (globulins) family.</text>
</comment>
<evidence type="ECO:0000250" key="1"/>
<evidence type="ECO:0000255" key="2"/>
<evidence type="ECO:0000256" key="3">
    <source>
        <dbReference type="SAM" id="MobiDB-lite"/>
    </source>
</evidence>
<evidence type="ECO:0000269" key="4">
    <source>
    </source>
</evidence>
<evidence type="ECO:0000305" key="5"/>
<organism>
    <name type="scientific">Oryza sativa subsp. japonica</name>
    <name type="common">Rice</name>
    <dbReference type="NCBI Taxonomy" id="39947"/>
    <lineage>
        <taxon>Eukaryota</taxon>
        <taxon>Viridiplantae</taxon>
        <taxon>Streptophyta</taxon>
        <taxon>Embryophyta</taxon>
        <taxon>Tracheophyta</taxon>
        <taxon>Spermatophyta</taxon>
        <taxon>Magnoliopsida</taxon>
        <taxon>Liliopsida</taxon>
        <taxon>Poales</taxon>
        <taxon>Poaceae</taxon>
        <taxon>BOP clade</taxon>
        <taxon>Oryzoideae</taxon>
        <taxon>Oryzeae</taxon>
        <taxon>Oryzinae</taxon>
        <taxon>Oryza</taxon>
        <taxon>Oryza sativa</taxon>
    </lineage>
</organism>
<sequence>MATIAFSRLSIYFCVLLLCHGSMAQLFGPNVNPWHNPRQGGFRECRFDRLQAFEPLRRVRSEAGVTEYFDEKNEQFQCTGTFVIRRVIEPQGLLVPRYSNTPGMVYIIQGRGSMGLTFPGCPATYQQQFQQFLPEGQSQSQKFRDEHQKIHQFRQGDIVALPAGVAHWFYNEGDAPVVALYVFDLNNNANQLEPRQKEFLLAGNNNREQQMYGRSIEQHSGQNIFSGFNNELLSEALGVNALVAKRLQGQNDQRGEIIRVKNGLKLLRPAFAQQQEQAQQQEQAQAQYQVQYSEEQQPSTRCNGLDENFCTIKARLNIENPSHADTYNPRAGRITRLNSQKFPILNLVQLSATRVNLYQNAILSPFWNVNAHSLVYIVQGHARVQVVSNLGKTVFNGVLRPGQLLIIPQHYVVLKKAEHEGCQYISFKTNANSMVSHLAGKNSIFRAMPVDVIANAYRISREQARSLKNNRGEELGAFTPRYQQQTYPGFSNESENEALE</sequence>
<name>GLUB4_ORYSJ</name>
<accession>P14614</accession>
<accession>Q546X7</accession>
<accession>Q7GBB0</accession>
<dbReference type="EMBL" id="X14393">
    <property type="protein sequence ID" value="CAA32566.1"/>
    <property type="molecule type" value="mRNA"/>
</dbReference>
<dbReference type="EMBL" id="AB093593">
    <property type="protein sequence ID" value="BAC77348.1"/>
    <property type="molecule type" value="Genomic_DNA"/>
</dbReference>
<dbReference type="EMBL" id="AF537221">
    <property type="protein sequence ID" value="AAM97692.1"/>
    <property type="molecule type" value="Genomic_DNA"/>
</dbReference>
<dbReference type="EMBL" id="AP005428">
    <property type="protein sequence ID" value="BAD28628.1"/>
    <property type="molecule type" value="Genomic_DNA"/>
</dbReference>
<dbReference type="EMBL" id="AP014958">
    <property type="protein sequence ID" value="BAS78036.1"/>
    <property type="molecule type" value="Genomic_DNA"/>
</dbReference>
<dbReference type="PIR" id="S05443">
    <property type="entry name" value="S05443"/>
</dbReference>
<dbReference type="RefSeq" id="XP_015626321.1">
    <property type="nucleotide sequence ID" value="XM_015770835.1"/>
</dbReference>
<dbReference type="SMR" id="P14614"/>
<dbReference type="FunCoup" id="P14614">
    <property type="interactions" value="2006"/>
</dbReference>
<dbReference type="IntAct" id="P14614">
    <property type="interactions" value="4"/>
</dbReference>
<dbReference type="STRING" id="39947.P14614"/>
<dbReference type="PaxDb" id="39947-P14614"/>
<dbReference type="EnsemblPlants" id="Os02t0268300-00">
    <property type="protein sequence ID" value="Os02t0268300-00"/>
    <property type="gene ID" value="Os02g0268300"/>
</dbReference>
<dbReference type="Gramene" id="Os02t0268300-00">
    <property type="protein sequence ID" value="Os02t0268300-00"/>
    <property type="gene ID" value="Os02g0268300"/>
</dbReference>
<dbReference type="eggNOG" id="ENOG502QU1J">
    <property type="taxonomic scope" value="Eukaryota"/>
</dbReference>
<dbReference type="HOGENOM" id="CLU_026341_2_0_1"/>
<dbReference type="InParanoid" id="P14614"/>
<dbReference type="OMA" id="GEQFEWI"/>
<dbReference type="OrthoDB" id="2016041at2759"/>
<dbReference type="Proteomes" id="UP000000763">
    <property type="component" value="Chromosome 2"/>
</dbReference>
<dbReference type="Proteomes" id="UP000059680">
    <property type="component" value="Chromosome 2"/>
</dbReference>
<dbReference type="ExpressionAtlas" id="P14614">
    <property type="expression patterns" value="baseline and differential"/>
</dbReference>
<dbReference type="GO" id="GO:0045735">
    <property type="term" value="F:nutrient reservoir activity"/>
    <property type="evidence" value="ECO:0007669"/>
    <property type="project" value="UniProtKB-KW"/>
</dbReference>
<dbReference type="GO" id="GO:0048316">
    <property type="term" value="P:seed development"/>
    <property type="evidence" value="ECO:0007669"/>
    <property type="project" value="UniProtKB-ARBA"/>
</dbReference>
<dbReference type="CDD" id="cd02243">
    <property type="entry name" value="cupin_11S_legumin_C"/>
    <property type="match status" value="1"/>
</dbReference>
<dbReference type="CDD" id="cd02242">
    <property type="entry name" value="cupin_11S_legumin_N"/>
    <property type="match status" value="1"/>
</dbReference>
<dbReference type="FunFam" id="2.60.120.10:FF:000073">
    <property type="entry name" value="Glycinin G1"/>
    <property type="match status" value="1"/>
</dbReference>
<dbReference type="Gene3D" id="2.60.120.10">
    <property type="entry name" value="Jelly Rolls"/>
    <property type="match status" value="2"/>
</dbReference>
<dbReference type="InterPro" id="IPR022379">
    <property type="entry name" value="11S_seedstore_CS"/>
</dbReference>
<dbReference type="InterPro" id="IPR006044">
    <property type="entry name" value="11S_seedstore_pln"/>
</dbReference>
<dbReference type="InterPro" id="IPR006045">
    <property type="entry name" value="Cupin_1"/>
</dbReference>
<dbReference type="InterPro" id="IPR014710">
    <property type="entry name" value="RmlC-like_jellyroll"/>
</dbReference>
<dbReference type="InterPro" id="IPR011051">
    <property type="entry name" value="RmlC_Cupin_sf"/>
</dbReference>
<dbReference type="InterPro" id="IPR050253">
    <property type="entry name" value="Seed_Storage-Functional"/>
</dbReference>
<dbReference type="PANTHER" id="PTHR31189:SF35">
    <property type="entry name" value="12S SEED STORAGE PROTEIN CRB"/>
    <property type="match status" value="1"/>
</dbReference>
<dbReference type="PANTHER" id="PTHR31189">
    <property type="entry name" value="OS03G0336100 PROTEIN-RELATED"/>
    <property type="match status" value="1"/>
</dbReference>
<dbReference type="Pfam" id="PF00190">
    <property type="entry name" value="Cupin_1"/>
    <property type="match status" value="2"/>
</dbReference>
<dbReference type="PRINTS" id="PR00439">
    <property type="entry name" value="11SGLOBULIN"/>
</dbReference>
<dbReference type="SMART" id="SM00835">
    <property type="entry name" value="Cupin_1"/>
    <property type="match status" value="2"/>
</dbReference>
<dbReference type="SUPFAM" id="SSF51182">
    <property type="entry name" value="RmlC-like cupins"/>
    <property type="match status" value="1"/>
</dbReference>
<dbReference type="PROSITE" id="PS00305">
    <property type="entry name" value="11S_SEED_STORAGE"/>
    <property type="match status" value="1"/>
</dbReference>
<gene>
    <name type="primary">GLUB4</name>
    <name type="synonym">GLUB-4</name>
    <name type="ordered locus">Os02g0268300</name>
    <name type="ordered locus">LOC_Os02g16830</name>
    <name type="ORF">P0693E08.16</name>
</gene>
<feature type="signal peptide" evidence="2">
    <location>
        <begin position="1"/>
        <end position="24"/>
    </location>
</feature>
<feature type="chain" id="PRO_0000032054" description="Glutelin type-B 4 acidic chain" evidence="1">
    <location>
        <begin position="25"/>
        <end position="303"/>
    </location>
</feature>
<feature type="chain" id="PRO_0000032055" description="Glutelin type-B 4 basic chain" evidence="1">
    <location>
        <begin position="304"/>
        <end position="500"/>
    </location>
</feature>
<feature type="domain" description="Cupin type-1 1" evidence="2">
    <location>
        <begin position="50"/>
        <end position="245"/>
    </location>
</feature>
<feature type="domain" description="Cupin type-1 2" evidence="2">
    <location>
        <begin position="316"/>
        <end position="465"/>
    </location>
</feature>
<feature type="region of interest" description="Disordered" evidence="3">
    <location>
        <begin position="481"/>
        <end position="500"/>
    </location>
</feature>
<feature type="compositionally biased region" description="Polar residues" evidence="3">
    <location>
        <begin position="481"/>
        <end position="493"/>
    </location>
</feature>
<feature type="disulfide bond" evidence="1">
    <location>
        <begin position="45"/>
        <end position="78"/>
    </location>
</feature>
<feature type="disulfide bond" description="Interchain (between acidic and basic chains)" evidence="2">
    <location>
        <begin position="121"/>
        <end position="310"/>
    </location>
</feature>
<proteinExistence type="evidence at protein level"/>
<reference key="1">
    <citation type="journal article" date="1989" name="Plant Mol. Biol.">
        <title>Nucleotide sequence of a cDNA encoding a major rice glutelin.</title>
        <authorList>
            <person name="Masumura T."/>
            <person name="Kidzu K."/>
            <person name="Sugiyama Y."/>
            <person name="Mitsukawa N."/>
            <person name="Hibino T."/>
            <person name="Tanaka K."/>
            <person name="Fujii S."/>
        </authorList>
    </citation>
    <scope>NUCLEOTIDE SEQUENCE [MRNA]</scope>
    <source>
        <strain>cv. Nipponbare</strain>
        <tissue>Seed</tissue>
    </source>
</reference>
<reference key="2">
    <citation type="journal article" date="2003" name="Plant Cell">
        <title>Low glutelin content1: a dominant mutation that suppresses the glutelin multigene family via RNA silencing in rice.</title>
        <authorList>
            <person name="Kusaba M."/>
            <person name="Miyahara K."/>
            <person name="Iida S."/>
            <person name="Fukuoka H."/>
            <person name="Takano T."/>
            <person name="Sassa H."/>
            <person name="Nishimura M."/>
            <person name="Nishio T."/>
        </authorList>
    </citation>
    <scope>NUCLEOTIDE SEQUENCE [GENOMIC DNA]</scope>
</reference>
<reference key="3">
    <citation type="submission" date="2002-08" db="EMBL/GenBank/DDBJ databases">
        <title>New rice glutelin gene GluB-4.</title>
        <authorList>
            <person name="Jiang S."/>
            <person name="Wan J."/>
            <person name="Xu L."/>
        </authorList>
    </citation>
    <scope>NUCLEOTIDE SEQUENCE [GENOMIC DNA]</scope>
</reference>
<reference key="4">
    <citation type="journal article" date="2005" name="Nature">
        <title>The map-based sequence of the rice genome.</title>
        <authorList>
            <consortium name="International rice genome sequencing project (IRGSP)"/>
        </authorList>
    </citation>
    <scope>NUCLEOTIDE SEQUENCE [LARGE SCALE GENOMIC DNA]</scope>
    <source>
        <strain>cv. Nipponbare</strain>
    </source>
</reference>
<reference key="5">
    <citation type="journal article" date="2013" name="Rice">
        <title>Improvement of the Oryza sativa Nipponbare reference genome using next generation sequence and optical map data.</title>
        <authorList>
            <person name="Kawahara Y."/>
            <person name="de la Bastide M."/>
            <person name="Hamilton J.P."/>
            <person name="Kanamori H."/>
            <person name="McCombie W.R."/>
            <person name="Ouyang S."/>
            <person name="Schwartz D.C."/>
            <person name="Tanaka T."/>
            <person name="Wu J."/>
            <person name="Zhou S."/>
            <person name="Childs K.L."/>
            <person name="Davidson R.M."/>
            <person name="Lin H."/>
            <person name="Quesada-Ocampo L."/>
            <person name="Vaillancourt B."/>
            <person name="Sakai H."/>
            <person name="Lee S.S."/>
            <person name="Kim J."/>
            <person name="Numa H."/>
            <person name="Itoh T."/>
            <person name="Buell C.R."/>
            <person name="Matsumoto T."/>
        </authorList>
    </citation>
    <scope>GENOME REANNOTATION</scope>
    <source>
        <strain>cv. Nipponbare</strain>
    </source>
</reference>
<reference key="6">
    <citation type="journal article" date="2004" name="Nucleic Acids Res.">
        <title>Rice proteome database based on two-dimensional polyacrylamide gel electrophoresis: its status in 2003.</title>
        <authorList>
            <person name="Komatsu S."/>
            <person name="Kojima K."/>
            <person name="Suzuki K."/>
            <person name="Ozaki K."/>
            <person name="Higo K."/>
        </authorList>
    </citation>
    <scope>PROTEIN SEQUENCE OF 25-41; 68-84 AND 199-215</scope>
    <scope>TISSUE SPECIFICITY</scope>
    <source>
        <strain>cv. Nipponbare</strain>
        <tissue>Endosperm</tissue>
    </source>
</reference>